<evidence type="ECO:0000250" key="1"/>
<evidence type="ECO:0000250" key="2">
    <source>
        <dbReference type="UniProtKB" id="Q06485"/>
    </source>
</evidence>
<evidence type="ECO:0000255" key="3"/>
<evidence type="ECO:0000256" key="4">
    <source>
        <dbReference type="SAM" id="MobiDB-lite"/>
    </source>
</evidence>
<evidence type="ECO:0000305" key="5"/>
<dbReference type="EMBL" id="DS981519">
    <property type="protein sequence ID" value="EDV08669.1"/>
    <property type="molecule type" value="Genomic_DNA"/>
</dbReference>
<dbReference type="HOGENOM" id="CLU_105986_1_0_1"/>
<dbReference type="OrthoDB" id="41464at4893"/>
<dbReference type="Proteomes" id="UP000008335">
    <property type="component" value="Unassembled WGS sequence"/>
</dbReference>
<dbReference type="GO" id="GO:0005741">
    <property type="term" value="C:mitochondrial outer membrane"/>
    <property type="evidence" value="ECO:0007669"/>
    <property type="project" value="TreeGrafter"/>
</dbReference>
<dbReference type="GO" id="GO:0000422">
    <property type="term" value="P:autophagy of mitochondrion"/>
    <property type="evidence" value="ECO:0007669"/>
    <property type="project" value="TreeGrafter"/>
</dbReference>
<dbReference type="GO" id="GO:0016236">
    <property type="term" value="P:macroautophagy"/>
    <property type="evidence" value="ECO:0007669"/>
    <property type="project" value="TreeGrafter"/>
</dbReference>
<dbReference type="InterPro" id="IPR051668">
    <property type="entry name" value="ATG33"/>
</dbReference>
<dbReference type="PANTHER" id="PTHR37278">
    <property type="entry name" value="AUTOPHAGY-RELATED PROTEIN 33-RELATED"/>
    <property type="match status" value="1"/>
</dbReference>
<dbReference type="PANTHER" id="PTHR37278:SF1">
    <property type="entry name" value="AUTOPHAGY-RELATED PROTEIN 33-RELATED"/>
    <property type="match status" value="1"/>
</dbReference>
<gene>
    <name type="primary">ATG33</name>
    <name type="ORF">SCRG_04299</name>
</gene>
<sequence>MSVCLAITKGIAVSSIGLYSGLLASASLITSTTPLEVLTGSLTPTLTTLKNAATALGAFASTFFCVSFFGAPPSLRHPYLLYGMLAAPLSSFVLGCASNYQSRKYSKVSKESSLFPEDSKPAASELSDSIIDLGEDNHASENTPRDGKPAATTVSKPAEALHTGPPIHTKNLIAATAIAIVGFVQAVIGVYGEGQFI</sequence>
<proteinExistence type="inferred from homology"/>
<accession>B3RHM5</accession>
<comment type="function">
    <text evidence="1">Involved in the selective degradation of mitochondria via autophagy during starvation and at post-log phase.</text>
</comment>
<comment type="subcellular location">
    <subcellularLocation>
        <location evidence="5">Mitochondrion membrane</location>
        <topology evidence="5">Multi-pass membrane protein</topology>
    </subcellularLocation>
</comment>
<comment type="similarity">
    <text evidence="5">Belongs to the ATG33 family.</text>
</comment>
<feature type="chain" id="PRO_0000399769" description="Autophagy-related protein 33">
    <location>
        <begin position="1"/>
        <end position="197"/>
    </location>
</feature>
<feature type="transmembrane region" description="Helical" evidence="3">
    <location>
        <begin position="10"/>
        <end position="30"/>
    </location>
</feature>
<feature type="transmembrane region" description="Helical" evidence="3">
    <location>
        <begin position="52"/>
        <end position="72"/>
    </location>
</feature>
<feature type="transmembrane region" description="Helical" evidence="3">
    <location>
        <begin position="78"/>
        <end position="98"/>
    </location>
</feature>
<feature type="transmembrane region" description="Helical" evidence="3">
    <location>
        <begin position="172"/>
        <end position="192"/>
    </location>
</feature>
<feature type="region of interest" description="Disordered" evidence="4">
    <location>
        <begin position="135"/>
        <end position="154"/>
    </location>
</feature>
<feature type="compositionally biased region" description="Basic and acidic residues" evidence="4">
    <location>
        <begin position="135"/>
        <end position="148"/>
    </location>
</feature>
<feature type="modified residue" description="Phosphoserine" evidence="2">
    <location>
        <position position="127"/>
    </location>
</feature>
<feature type="modified residue" description="Phosphoserine" evidence="2">
    <location>
        <position position="129"/>
    </location>
</feature>
<protein>
    <recommendedName>
        <fullName>Autophagy-related protein 33</fullName>
    </recommendedName>
</protein>
<reference key="1">
    <citation type="submission" date="2005-03" db="EMBL/GenBank/DDBJ databases">
        <title>Annotation of the Saccharomyces cerevisiae RM11-1a genome.</title>
        <authorList>
            <consortium name="The Broad Institute Genome Sequencing Platform"/>
            <person name="Birren B.W."/>
            <person name="Lander E.S."/>
            <person name="Galagan J.E."/>
            <person name="Nusbaum C."/>
            <person name="Devon K."/>
            <person name="Cuomo C."/>
            <person name="Jaffe D.B."/>
            <person name="Butler J."/>
            <person name="Alvarez P."/>
            <person name="Gnerre S."/>
            <person name="Grabherr M."/>
            <person name="Kleber M."/>
            <person name="Mauceli E.W."/>
            <person name="Brockman W."/>
            <person name="MacCallum I.A."/>
            <person name="Rounsley S."/>
            <person name="Young S.K."/>
            <person name="LaButti K."/>
            <person name="Pushparaj V."/>
            <person name="DeCaprio D."/>
            <person name="Crawford M."/>
            <person name="Koehrsen M."/>
            <person name="Engels R."/>
            <person name="Montgomery P."/>
            <person name="Pearson M."/>
            <person name="Howarth C."/>
            <person name="Larson L."/>
            <person name="Luoma S."/>
            <person name="White J."/>
            <person name="O'Leary S."/>
            <person name="Kodira C.D."/>
            <person name="Zeng Q."/>
            <person name="Yandava C."/>
            <person name="Alvarado L."/>
            <person name="Pratt S."/>
            <person name="Kruglyak L."/>
        </authorList>
    </citation>
    <scope>NUCLEOTIDE SEQUENCE [LARGE SCALE GENOMIC DNA]</scope>
    <source>
        <strain>RM11-1a</strain>
    </source>
</reference>
<keyword id="KW-0072">Autophagy</keyword>
<keyword id="KW-0472">Membrane</keyword>
<keyword id="KW-0496">Mitochondrion</keyword>
<keyword id="KW-0597">Phosphoprotein</keyword>
<keyword id="KW-0812">Transmembrane</keyword>
<keyword id="KW-1133">Transmembrane helix</keyword>
<name>ATG33_YEAS1</name>
<organism>
    <name type="scientific">Saccharomyces cerevisiae (strain RM11-1a)</name>
    <name type="common">Baker's yeast</name>
    <dbReference type="NCBI Taxonomy" id="285006"/>
    <lineage>
        <taxon>Eukaryota</taxon>
        <taxon>Fungi</taxon>
        <taxon>Dikarya</taxon>
        <taxon>Ascomycota</taxon>
        <taxon>Saccharomycotina</taxon>
        <taxon>Saccharomycetes</taxon>
        <taxon>Saccharomycetales</taxon>
        <taxon>Saccharomycetaceae</taxon>
        <taxon>Saccharomyces</taxon>
    </lineage>
</organism>